<name>DRC8_CHLRE</name>
<evidence type="ECO:0000255" key="1">
    <source>
        <dbReference type="PROSITE-ProRule" id="PRU00448"/>
    </source>
</evidence>
<evidence type="ECO:0000269" key="2">
    <source>
    </source>
</evidence>
<evidence type="ECO:0000269" key="3">
    <source>
    </source>
</evidence>
<evidence type="ECO:0000303" key="4">
    <source>
    </source>
</evidence>
<evidence type="ECO:0000303" key="5">
    <source>
    </source>
</evidence>
<evidence type="ECO:0000305" key="6"/>
<gene>
    <name evidence="4 5" type="primary">DRC8</name>
    <name type="synonym">FAP200</name>
    <name evidence="6" type="ORF">CHLRE_16g676645v5</name>
    <name type="ORF">CHLREDRAFT_174407</name>
</gene>
<comment type="function">
    <text evidence="2 3">Component of the nexin-dynein regulatory complex (N-DRC), a key regulator of ciliary/flagellar motility which maintains the alignment and integrity of the distal axoneme and regulates microtubule sliding in motile axonemes (PubMed:23427265, PubMed:25411337).</text>
</comment>
<comment type="subunit">
    <text evidence="2 3">Component of the nexin-dynein regulatory complex (N-DRC) (PubMed:23427265, PubMed:25411337).</text>
</comment>
<comment type="subcellular location">
    <subcellularLocation>
        <location evidence="2 3">Cytoplasm</location>
        <location evidence="2 3">Cytoskeleton</location>
        <location evidence="2 3">Flagellum axoneme</location>
    </subcellularLocation>
</comment>
<comment type="similarity">
    <text evidence="6">Belongs to the DRC8 family.</text>
</comment>
<accession>A8J3A0</accession>
<proteinExistence type="evidence at protein level"/>
<reference key="1">
    <citation type="journal article" date="2007" name="Science">
        <title>The Chlamydomonas genome reveals the evolution of key animal and plant functions.</title>
        <authorList>
            <person name="Merchant S.S."/>
            <person name="Prochnik S.E."/>
            <person name="Vallon O."/>
            <person name="Harris E.H."/>
            <person name="Karpowicz S.J."/>
            <person name="Witman G.B."/>
            <person name="Terry A."/>
            <person name="Salamov A."/>
            <person name="Fritz-Laylin L.K."/>
            <person name="Marechal-Drouard L."/>
            <person name="Marshall W.F."/>
            <person name="Qu L.H."/>
            <person name="Nelson D.R."/>
            <person name="Sanderfoot A.A."/>
            <person name="Spalding M.H."/>
            <person name="Kapitonov V.V."/>
            <person name="Ren Q."/>
            <person name="Ferris P."/>
            <person name="Lindquist E."/>
            <person name="Shapiro H."/>
            <person name="Lucas S.M."/>
            <person name="Grimwood J."/>
            <person name="Schmutz J."/>
            <person name="Cardol P."/>
            <person name="Cerutti H."/>
            <person name="Chanfreau G."/>
            <person name="Chen C.L."/>
            <person name="Cognat V."/>
            <person name="Croft M.T."/>
            <person name="Dent R."/>
            <person name="Dutcher S."/>
            <person name="Fernandez E."/>
            <person name="Fukuzawa H."/>
            <person name="Gonzalez-Ballester D."/>
            <person name="Gonzalez-Halphen D."/>
            <person name="Hallmann A."/>
            <person name="Hanikenne M."/>
            <person name="Hippler M."/>
            <person name="Inwood W."/>
            <person name="Jabbari K."/>
            <person name="Kalanon M."/>
            <person name="Kuras R."/>
            <person name="Lefebvre P.A."/>
            <person name="Lemaire S.D."/>
            <person name="Lobanov A.V."/>
            <person name="Lohr M."/>
            <person name="Manuell A."/>
            <person name="Meier I."/>
            <person name="Mets L."/>
            <person name="Mittag M."/>
            <person name="Mittelmeier T."/>
            <person name="Moroney J.V."/>
            <person name="Moseley J."/>
            <person name="Napoli C."/>
            <person name="Nedelcu A.M."/>
            <person name="Niyogi K."/>
            <person name="Novoselov S.V."/>
            <person name="Paulsen I.T."/>
            <person name="Pazour G.J."/>
            <person name="Purton S."/>
            <person name="Ral J.P."/>
            <person name="Riano-Pachon D.M."/>
            <person name="Riekhof W."/>
            <person name="Rymarquis L."/>
            <person name="Schroda M."/>
            <person name="Stern D."/>
            <person name="Umen J."/>
            <person name="Willows R."/>
            <person name="Wilson N."/>
            <person name="Zimmer S.L."/>
            <person name="Allmer J."/>
            <person name="Balk J."/>
            <person name="Bisova K."/>
            <person name="Chen C.J."/>
            <person name="Elias M."/>
            <person name="Gendler K."/>
            <person name="Hauser C."/>
            <person name="Lamb M.R."/>
            <person name="Ledford H."/>
            <person name="Long J.C."/>
            <person name="Minagawa J."/>
            <person name="Page M.D."/>
            <person name="Pan J."/>
            <person name="Pootakham W."/>
            <person name="Roje S."/>
            <person name="Rose A."/>
            <person name="Stahlberg E."/>
            <person name="Terauchi A.M."/>
            <person name="Yang P."/>
            <person name="Ball S."/>
            <person name="Bowler C."/>
            <person name="Dieckmann C.L."/>
            <person name="Gladyshev V.N."/>
            <person name="Green P."/>
            <person name="Jorgensen R."/>
            <person name="Mayfield S."/>
            <person name="Mueller-Roeber B."/>
            <person name="Rajamani S."/>
            <person name="Sayre R.T."/>
            <person name="Brokstein P."/>
            <person name="Dubchak I."/>
            <person name="Goodstein D."/>
            <person name="Hornick L."/>
            <person name="Huang Y.W."/>
            <person name="Jhaveri J."/>
            <person name="Luo Y."/>
            <person name="Martinez D."/>
            <person name="Ngau W.C."/>
            <person name="Otillar B."/>
            <person name="Poliakov A."/>
            <person name="Porter A."/>
            <person name="Szajkowski L."/>
            <person name="Werner G."/>
            <person name="Zhou K."/>
            <person name="Grigoriev I.V."/>
            <person name="Rokhsar D.S."/>
            <person name="Grossman A.R."/>
        </authorList>
    </citation>
    <scope>NUCLEOTIDE SEQUENCE [LARGE SCALE GENOMIC DNA]</scope>
    <source>
        <strain>CC-503</strain>
    </source>
</reference>
<reference key="2">
    <citation type="journal article" date="2013" name="Mol. Biol. Cell">
        <title>The N-DRC forms a conserved biochemical complex that maintains outer doublet alignment and limits microtubule sliding in motile axonemes.</title>
        <authorList>
            <person name="Bower R."/>
            <person name="Tritschler D."/>
            <person name="Vanderwaal K."/>
            <person name="Perrone C.A."/>
            <person name="Mueller J."/>
            <person name="Fox L."/>
            <person name="Sale W.S."/>
            <person name="Porter M.E."/>
        </authorList>
    </citation>
    <scope>FUNCTION</scope>
    <scope>SUBUNIT</scope>
    <scope>SUBCELLULAR LOCATION</scope>
</reference>
<reference key="3">
    <citation type="journal article" date="2015" name="Mol. Biol. Cell">
        <title>Detailed structural and biochemical characterization of the nexin-dynein regulatory complex.</title>
        <authorList>
            <person name="Oda T."/>
            <person name="Yanagisawa H."/>
            <person name="Kikkawa M."/>
        </authorList>
    </citation>
    <scope>FUNCTION</scope>
    <scope>SUBUNIT</scope>
    <scope>SUBCELLULAR LOCATION</scope>
</reference>
<feature type="chain" id="PRO_0000444018" description="Dynein regulatory complex protein 8">
    <location>
        <begin position="1"/>
        <end position="166"/>
    </location>
</feature>
<feature type="domain" description="EF-hand" evidence="1">
    <location>
        <begin position="95"/>
        <end position="130"/>
    </location>
</feature>
<organism>
    <name type="scientific">Chlamydomonas reinhardtii</name>
    <name type="common">Chlamydomonas smithii</name>
    <dbReference type="NCBI Taxonomy" id="3055"/>
    <lineage>
        <taxon>Eukaryota</taxon>
        <taxon>Viridiplantae</taxon>
        <taxon>Chlorophyta</taxon>
        <taxon>core chlorophytes</taxon>
        <taxon>Chlorophyceae</taxon>
        <taxon>CS clade</taxon>
        <taxon>Chlamydomonadales</taxon>
        <taxon>Chlamydomonadaceae</taxon>
        <taxon>Chlamydomonas</taxon>
    </lineage>
</organism>
<protein>
    <recommendedName>
        <fullName evidence="4 5">Dynein regulatory complex protein 8</fullName>
    </recommendedName>
    <alternativeName>
        <fullName>Flagellar associated protein 200</fullName>
    </alternativeName>
</protein>
<dbReference type="EMBL" id="DS496135">
    <property type="protein sequence ID" value="EDP01226.1"/>
    <property type="molecule type" value="Genomic_DNA"/>
</dbReference>
<dbReference type="EMBL" id="CM008977">
    <property type="protein sequence ID" value="PNW72406.1"/>
    <property type="molecule type" value="Genomic_DNA"/>
</dbReference>
<dbReference type="RefSeq" id="XP_001695889.1">
    <property type="nucleotide sequence ID" value="XM_001695837.1"/>
</dbReference>
<dbReference type="PDB" id="8GLV">
    <property type="method" value="EM"/>
    <property type="resolution" value="3.10 A"/>
    <property type="chains" value="EZ/HF/HM=1-166"/>
</dbReference>
<dbReference type="PDBsum" id="8GLV"/>
<dbReference type="EMDB" id="EMD-40220"/>
<dbReference type="SMR" id="A8J3A0"/>
<dbReference type="STRING" id="3055.A8J3A0"/>
<dbReference type="PaxDb" id="3055-EDP01226"/>
<dbReference type="EnsemblPlants" id="PNW72406">
    <property type="protein sequence ID" value="PNW72406"/>
    <property type="gene ID" value="CHLRE_16g676645v5"/>
</dbReference>
<dbReference type="GeneID" id="5721352"/>
<dbReference type="Gramene" id="PNW72406">
    <property type="protein sequence ID" value="PNW72406"/>
    <property type="gene ID" value="CHLRE_16g676645v5"/>
</dbReference>
<dbReference type="KEGG" id="cre:CHLRE_16g676645v5"/>
<dbReference type="eggNOG" id="KOG0027">
    <property type="taxonomic scope" value="Eukaryota"/>
</dbReference>
<dbReference type="HOGENOM" id="CLU_061288_19_2_1"/>
<dbReference type="InParanoid" id="A8J3A0"/>
<dbReference type="OMA" id="WYEDYAQ"/>
<dbReference type="OrthoDB" id="10260307at2759"/>
<dbReference type="Proteomes" id="UP000006906">
    <property type="component" value="Chromosome 16"/>
</dbReference>
<dbReference type="GO" id="GO:0005930">
    <property type="term" value="C:axoneme"/>
    <property type="evidence" value="ECO:0000314"/>
    <property type="project" value="UniProtKB"/>
</dbReference>
<dbReference type="GO" id="GO:0031514">
    <property type="term" value="C:motile cilium"/>
    <property type="evidence" value="ECO:0007669"/>
    <property type="project" value="UniProtKB-KW"/>
</dbReference>
<dbReference type="GO" id="GO:0016460">
    <property type="term" value="C:myosin II complex"/>
    <property type="evidence" value="ECO:0000318"/>
    <property type="project" value="GO_Central"/>
</dbReference>
<dbReference type="GO" id="GO:0005509">
    <property type="term" value="F:calcium ion binding"/>
    <property type="evidence" value="ECO:0007669"/>
    <property type="project" value="InterPro"/>
</dbReference>
<dbReference type="CDD" id="cd00051">
    <property type="entry name" value="EFh"/>
    <property type="match status" value="1"/>
</dbReference>
<dbReference type="FunFam" id="1.10.238.10:FF:000001">
    <property type="entry name" value="Calmodulin 1"/>
    <property type="match status" value="1"/>
</dbReference>
<dbReference type="Gene3D" id="1.10.238.10">
    <property type="entry name" value="EF-hand"/>
    <property type="match status" value="1"/>
</dbReference>
<dbReference type="InterPro" id="IPR050230">
    <property type="entry name" value="CALM/Myosin/TropC-like"/>
</dbReference>
<dbReference type="InterPro" id="IPR011992">
    <property type="entry name" value="EF-hand-dom_pair"/>
</dbReference>
<dbReference type="InterPro" id="IPR002048">
    <property type="entry name" value="EF_hand_dom"/>
</dbReference>
<dbReference type="PANTHER" id="PTHR23048:SF32">
    <property type="entry name" value="DYNEIN REGULATORY COMPLEX PROTEIN 8"/>
    <property type="match status" value="1"/>
</dbReference>
<dbReference type="PANTHER" id="PTHR23048">
    <property type="entry name" value="MYOSIN LIGHT CHAIN 1, 3"/>
    <property type="match status" value="1"/>
</dbReference>
<dbReference type="Pfam" id="PF13499">
    <property type="entry name" value="EF-hand_7"/>
    <property type="match status" value="1"/>
</dbReference>
<dbReference type="SUPFAM" id="SSF47473">
    <property type="entry name" value="EF-hand"/>
    <property type="match status" value="1"/>
</dbReference>
<dbReference type="PROSITE" id="PS50222">
    <property type="entry name" value="EF_HAND_2"/>
    <property type="match status" value="1"/>
</dbReference>
<keyword id="KW-0002">3D-structure</keyword>
<keyword id="KW-0966">Cell projection</keyword>
<keyword id="KW-0969">Cilium</keyword>
<keyword id="KW-0963">Cytoplasm</keyword>
<keyword id="KW-0206">Cytoskeleton</keyword>
<keyword id="KW-0282">Flagellum</keyword>
<keyword id="KW-1185">Reference proteome</keyword>
<sequence>MSKLNDKHERVRARVREAFILFEHKEGSRLVDFKDVPTAVRACGVNPTAVQMTHILDQLAALNAETDATGYVGLENFELVVCNFLIQQEASLFRDDYHTLLRAFRAFDPDGRGFIDAESFKSLLTGKGEALSEDELAKMMTVAADGEGKIWYEDYAQRLANDGRTI</sequence>